<protein>
    <recommendedName>
        <fullName>Aspartate beta-hydroxylase domain-containing protein 2</fullName>
        <ecNumber>1.14.11.-</ecNumber>
    </recommendedName>
</protein>
<reference key="1">
    <citation type="submission" date="2008-08" db="EMBL/GenBank/DDBJ databases">
        <authorList>
            <consortium name="NIH - Xenopus Gene Collection (XGC) project"/>
        </authorList>
    </citation>
    <scope>NUCLEOTIDE SEQUENCE [LARGE SCALE MRNA]</scope>
    <source>
        <tissue>Brain</tissue>
    </source>
</reference>
<name>ASPH2_XENTR</name>
<organism>
    <name type="scientific">Xenopus tropicalis</name>
    <name type="common">Western clawed frog</name>
    <name type="synonym">Silurana tropicalis</name>
    <dbReference type="NCBI Taxonomy" id="8364"/>
    <lineage>
        <taxon>Eukaryota</taxon>
        <taxon>Metazoa</taxon>
        <taxon>Chordata</taxon>
        <taxon>Craniata</taxon>
        <taxon>Vertebrata</taxon>
        <taxon>Euteleostomi</taxon>
        <taxon>Amphibia</taxon>
        <taxon>Batrachia</taxon>
        <taxon>Anura</taxon>
        <taxon>Pipoidea</taxon>
        <taxon>Pipidae</taxon>
        <taxon>Xenopodinae</taxon>
        <taxon>Xenopus</taxon>
        <taxon>Silurana</taxon>
    </lineage>
</organism>
<accession>B5DE73</accession>
<sequence length="370" mass="41798">MVWALPRTSSPSCIAPSYKPDSGWIKMSAEWLIDWSCLLNGLRDLIAGCIQAVRDCNSFALTTVICLLMLFAWYCYRVGKDQPRSPFATVNLLIQSSEAKGLQNGFAYCHSRECVRCTHNDGLNQKLYHNLQEYAKRYSWSGMGRIHKGIREQGRYLNNRPSIQKPEVFFLPDLPTMPYFPRDAQKHDVELLEQNFATILSEFEAIYKAFSNCSLPQGWKVNSTPSGEWFTFYLVNQGVTIPSNCKKCPRTYRLLGNLRTFIGNNVFGNACISVLTPGTVITEHYGPTNIRIRCHLGLRIPGNCELVVGGEPQCWAEGHCLLFDDSFLHTAFHEGSAEEGPRVIFMVDLWHPNVAAAERQALDSIFAPGR</sequence>
<gene>
    <name type="primary">asphd2</name>
</gene>
<evidence type="ECO:0000250" key="1"/>
<evidence type="ECO:0000255" key="2"/>
<evidence type="ECO:0000305" key="3"/>
<proteinExistence type="evidence at transcript level"/>
<keyword id="KW-0223">Dioxygenase</keyword>
<keyword id="KW-0325">Glycoprotein</keyword>
<keyword id="KW-0408">Iron</keyword>
<keyword id="KW-0472">Membrane</keyword>
<keyword id="KW-0479">Metal-binding</keyword>
<keyword id="KW-0560">Oxidoreductase</keyword>
<keyword id="KW-1185">Reference proteome</keyword>
<keyword id="KW-0735">Signal-anchor</keyword>
<keyword id="KW-0812">Transmembrane</keyword>
<keyword id="KW-1133">Transmembrane helix</keyword>
<dbReference type="EC" id="1.14.11.-"/>
<dbReference type="EMBL" id="BC168555">
    <property type="protein sequence ID" value="AAI68555.1"/>
    <property type="molecule type" value="mRNA"/>
</dbReference>
<dbReference type="RefSeq" id="NP_001135655.1">
    <property type="nucleotide sequence ID" value="NM_001142183.1"/>
</dbReference>
<dbReference type="SMR" id="B5DE73"/>
<dbReference type="FunCoup" id="B5DE73">
    <property type="interactions" value="628"/>
</dbReference>
<dbReference type="STRING" id="8364.ENSXETP00000002627"/>
<dbReference type="GlyCosmos" id="B5DE73">
    <property type="glycosylation" value="1 site, No reported glycans"/>
</dbReference>
<dbReference type="PaxDb" id="8364-ENSXETP00000063425"/>
<dbReference type="GeneID" id="100216215"/>
<dbReference type="KEGG" id="xtr:100216215"/>
<dbReference type="AGR" id="Xenbase:XB-GENE-5998370"/>
<dbReference type="CTD" id="57168"/>
<dbReference type="Xenbase" id="XB-GENE-5998370">
    <property type="gene designation" value="asphd2"/>
</dbReference>
<dbReference type="eggNOG" id="KOG3696">
    <property type="taxonomic scope" value="Eukaryota"/>
</dbReference>
<dbReference type="HOGENOM" id="CLU_059279_3_0_1"/>
<dbReference type="InParanoid" id="B5DE73"/>
<dbReference type="OMA" id="HIPSKDC"/>
<dbReference type="OrthoDB" id="438431at2759"/>
<dbReference type="TreeFam" id="TF312799"/>
<dbReference type="Proteomes" id="UP000008143">
    <property type="component" value="Chromosome 1"/>
</dbReference>
<dbReference type="GO" id="GO:0016020">
    <property type="term" value="C:membrane"/>
    <property type="evidence" value="ECO:0007669"/>
    <property type="project" value="UniProtKB-SubCell"/>
</dbReference>
<dbReference type="GO" id="GO:0051213">
    <property type="term" value="F:dioxygenase activity"/>
    <property type="evidence" value="ECO:0007669"/>
    <property type="project" value="UniProtKB-KW"/>
</dbReference>
<dbReference type="GO" id="GO:0046872">
    <property type="term" value="F:metal ion binding"/>
    <property type="evidence" value="ECO:0007669"/>
    <property type="project" value="UniProtKB-KW"/>
</dbReference>
<dbReference type="FunFam" id="2.60.120.330:FF:000011">
    <property type="entry name" value="Aspartate beta-hydroxylase domain-containing protein 2"/>
    <property type="match status" value="1"/>
</dbReference>
<dbReference type="Gene3D" id="2.60.120.330">
    <property type="entry name" value="B-lactam Antibiotic, Isopenicillin N Synthase, Chain"/>
    <property type="match status" value="1"/>
</dbReference>
<dbReference type="InterPro" id="IPR007803">
    <property type="entry name" value="Asp/Arg/Pro-Hydrxlase"/>
</dbReference>
<dbReference type="InterPro" id="IPR051821">
    <property type="entry name" value="Asp/Asn_beta-hydroxylase"/>
</dbReference>
<dbReference type="InterPro" id="IPR027443">
    <property type="entry name" value="IPNS-like_sf"/>
</dbReference>
<dbReference type="PANTHER" id="PTHR46332:SF5">
    <property type="entry name" value="ASPARTATE BETA-HYDROXYLASE DOMAIN CONTAINING 2"/>
    <property type="match status" value="1"/>
</dbReference>
<dbReference type="PANTHER" id="PTHR46332">
    <property type="entry name" value="ASPARTATE BETA-HYDROXYLASE DOMAIN-CONTAINING PROTEIN 2"/>
    <property type="match status" value="1"/>
</dbReference>
<dbReference type="Pfam" id="PF05118">
    <property type="entry name" value="Asp_Arg_Hydrox"/>
    <property type="match status" value="1"/>
</dbReference>
<dbReference type="SUPFAM" id="SSF51197">
    <property type="entry name" value="Clavaminate synthase-like"/>
    <property type="match status" value="1"/>
</dbReference>
<comment type="function">
    <text evidence="1">May function as 2-oxoglutarate-dependent dioxygenase.</text>
</comment>
<comment type="cofactor">
    <cofactor evidence="1">
        <name>Fe cation</name>
        <dbReference type="ChEBI" id="CHEBI:24875"/>
    </cofactor>
</comment>
<comment type="subcellular location">
    <subcellularLocation>
        <location evidence="3">Membrane</location>
        <topology evidence="3">Single-pass type II membrane protein</topology>
    </subcellularLocation>
</comment>
<comment type="similarity">
    <text evidence="3">Belongs to the aspartyl/asparaginyl beta-hydroxylase family.</text>
</comment>
<feature type="chain" id="PRO_0000394144" description="Aspartate beta-hydroxylase domain-containing protein 2">
    <location>
        <begin position="1"/>
        <end position="370"/>
    </location>
</feature>
<feature type="topological domain" description="Cytoplasmic" evidence="2">
    <location>
        <begin position="1"/>
        <end position="57"/>
    </location>
</feature>
<feature type="transmembrane region" description="Helical" evidence="2">
    <location>
        <begin position="58"/>
        <end position="78"/>
    </location>
</feature>
<feature type="topological domain" description="Lumenal" evidence="2">
    <location>
        <begin position="79"/>
        <end position="370"/>
    </location>
</feature>
<feature type="binding site" evidence="1">
    <location>
        <position position="229"/>
    </location>
    <ligand>
        <name>2-oxoglutarate</name>
        <dbReference type="ChEBI" id="CHEBI:16810"/>
    </ligand>
</feature>
<feature type="binding site" evidence="1">
    <location>
        <position position="273"/>
    </location>
    <ligand>
        <name>2-oxoglutarate</name>
        <dbReference type="ChEBI" id="CHEBI:16810"/>
    </ligand>
</feature>
<feature type="binding site" evidence="1">
    <location>
        <position position="284"/>
    </location>
    <ligand>
        <name>Fe cation</name>
        <dbReference type="ChEBI" id="CHEBI:24875"/>
    </ligand>
</feature>
<feature type="binding site" evidence="1">
    <location>
        <begin position="293"/>
        <end position="295"/>
    </location>
    <ligand>
        <name>2-oxoglutarate</name>
        <dbReference type="ChEBI" id="CHEBI:16810"/>
    </ligand>
</feature>
<feature type="binding site" evidence="1">
    <location>
        <position position="329"/>
    </location>
    <ligand>
        <name>Fe cation</name>
        <dbReference type="ChEBI" id="CHEBI:24875"/>
    </ligand>
</feature>
<feature type="binding site" evidence="1">
    <location>
        <position position="342"/>
    </location>
    <ligand>
        <name>2-oxoglutarate</name>
        <dbReference type="ChEBI" id="CHEBI:16810"/>
    </ligand>
</feature>
<feature type="glycosylation site" description="N-linked (GlcNAc...) asparagine" evidence="2">
    <location>
        <position position="212"/>
    </location>
</feature>